<organism>
    <name type="scientific">Myxococcus xanthus (strain DK1622)</name>
    <dbReference type="NCBI Taxonomy" id="246197"/>
    <lineage>
        <taxon>Bacteria</taxon>
        <taxon>Pseudomonadati</taxon>
        <taxon>Myxococcota</taxon>
        <taxon>Myxococcia</taxon>
        <taxon>Myxococcales</taxon>
        <taxon>Cystobacterineae</taxon>
        <taxon>Myxococcaceae</taxon>
        <taxon>Myxococcus</taxon>
    </lineage>
</organism>
<gene>
    <name evidence="1" type="primary">rpsQ</name>
    <name type="ordered locus">MXAN_3308</name>
</gene>
<sequence length="108" mass="12475">MREKMAEATETQASETSTRGRPKTRVGIVTSNKMQKTVVVTVQRRAPHPKYGKIMSLREKYKAHVEDHDYPKKITINEGDRVRIAETKPASKDKRWRVVEVLEKSKNV</sequence>
<keyword id="KW-1185">Reference proteome</keyword>
<keyword id="KW-0687">Ribonucleoprotein</keyword>
<keyword id="KW-0689">Ribosomal protein</keyword>
<keyword id="KW-0694">RNA-binding</keyword>
<keyword id="KW-0699">rRNA-binding</keyword>
<comment type="function">
    <text evidence="1">One of the primary rRNA binding proteins, it binds specifically to the 5'-end of 16S ribosomal RNA.</text>
</comment>
<comment type="subunit">
    <text evidence="1">Part of the 30S ribosomal subunit.</text>
</comment>
<comment type="similarity">
    <text evidence="1">Belongs to the universal ribosomal protein uS17 family.</text>
</comment>
<name>RS17_MYXXD</name>
<feature type="chain" id="PRO_0000255687" description="Small ribosomal subunit protein uS17">
    <location>
        <begin position="1"/>
        <end position="108"/>
    </location>
</feature>
<feature type="region of interest" description="Disordered" evidence="2">
    <location>
        <begin position="1"/>
        <end position="26"/>
    </location>
</feature>
<feature type="compositionally biased region" description="Low complexity" evidence="2">
    <location>
        <begin position="8"/>
        <end position="17"/>
    </location>
</feature>
<dbReference type="EMBL" id="CP000113">
    <property type="protein sequence ID" value="ABF90741.1"/>
    <property type="molecule type" value="Genomic_DNA"/>
</dbReference>
<dbReference type="SMR" id="Q1D766"/>
<dbReference type="STRING" id="246197.MXAN_3308"/>
<dbReference type="EnsemblBacteria" id="ABF90741">
    <property type="protein sequence ID" value="ABF90741"/>
    <property type="gene ID" value="MXAN_3308"/>
</dbReference>
<dbReference type="KEGG" id="mxa:MXAN_3308"/>
<dbReference type="eggNOG" id="COG0186">
    <property type="taxonomic scope" value="Bacteria"/>
</dbReference>
<dbReference type="HOGENOM" id="CLU_073626_1_0_7"/>
<dbReference type="Proteomes" id="UP000002402">
    <property type="component" value="Chromosome"/>
</dbReference>
<dbReference type="GO" id="GO:0022627">
    <property type="term" value="C:cytosolic small ribosomal subunit"/>
    <property type="evidence" value="ECO:0007669"/>
    <property type="project" value="TreeGrafter"/>
</dbReference>
<dbReference type="GO" id="GO:0019843">
    <property type="term" value="F:rRNA binding"/>
    <property type="evidence" value="ECO:0007669"/>
    <property type="project" value="UniProtKB-UniRule"/>
</dbReference>
<dbReference type="GO" id="GO:0003735">
    <property type="term" value="F:structural constituent of ribosome"/>
    <property type="evidence" value="ECO:0007669"/>
    <property type="project" value="InterPro"/>
</dbReference>
<dbReference type="GO" id="GO:0006412">
    <property type="term" value="P:translation"/>
    <property type="evidence" value="ECO:0007669"/>
    <property type="project" value="UniProtKB-UniRule"/>
</dbReference>
<dbReference type="CDD" id="cd00364">
    <property type="entry name" value="Ribosomal_uS17"/>
    <property type="match status" value="1"/>
</dbReference>
<dbReference type="Gene3D" id="2.40.50.140">
    <property type="entry name" value="Nucleic acid-binding proteins"/>
    <property type="match status" value="1"/>
</dbReference>
<dbReference type="HAMAP" id="MF_01345_B">
    <property type="entry name" value="Ribosomal_uS17_B"/>
    <property type="match status" value="1"/>
</dbReference>
<dbReference type="InterPro" id="IPR012340">
    <property type="entry name" value="NA-bd_OB-fold"/>
</dbReference>
<dbReference type="InterPro" id="IPR000266">
    <property type="entry name" value="Ribosomal_uS17"/>
</dbReference>
<dbReference type="InterPro" id="IPR019984">
    <property type="entry name" value="Ribosomal_uS17_bact/chlr"/>
</dbReference>
<dbReference type="NCBIfam" id="NF004123">
    <property type="entry name" value="PRK05610.1"/>
    <property type="match status" value="1"/>
</dbReference>
<dbReference type="PANTHER" id="PTHR10744">
    <property type="entry name" value="40S RIBOSOMAL PROTEIN S11 FAMILY MEMBER"/>
    <property type="match status" value="1"/>
</dbReference>
<dbReference type="PANTHER" id="PTHR10744:SF1">
    <property type="entry name" value="SMALL RIBOSOMAL SUBUNIT PROTEIN US17M"/>
    <property type="match status" value="1"/>
</dbReference>
<dbReference type="Pfam" id="PF00366">
    <property type="entry name" value="Ribosomal_S17"/>
    <property type="match status" value="1"/>
</dbReference>
<dbReference type="SUPFAM" id="SSF50249">
    <property type="entry name" value="Nucleic acid-binding proteins"/>
    <property type="match status" value="1"/>
</dbReference>
<reference key="1">
    <citation type="journal article" date="2006" name="Proc. Natl. Acad. Sci. U.S.A.">
        <title>Evolution of sensory complexity recorded in a myxobacterial genome.</title>
        <authorList>
            <person name="Goldman B.S."/>
            <person name="Nierman W.C."/>
            <person name="Kaiser D."/>
            <person name="Slater S.C."/>
            <person name="Durkin A.S."/>
            <person name="Eisen J.A."/>
            <person name="Ronning C.M."/>
            <person name="Barbazuk W.B."/>
            <person name="Blanchard M."/>
            <person name="Field C."/>
            <person name="Halling C."/>
            <person name="Hinkle G."/>
            <person name="Iartchuk O."/>
            <person name="Kim H.S."/>
            <person name="Mackenzie C."/>
            <person name="Madupu R."/>
            <person name="Miller N."/>
            <person name="Shvartsbeyn A."/>
            <person name="Sullivan S.A."/>
            <person name="Vaudin M."/>
            <person name="Wiegand R."/>
            <person name="Kaplan H.B."/>
        </authorList>
    </citation>
    <scope>NUCLEOTIDE SEQUENCE [LARGE SCALE GENOMIC DNA]</scope>
    <source>
        <strain>DK1622</strain>
    </source>
</reference>
<evidence type="ECO:0000255" key="1">
    <source>
        <dbReference type="HAMAP-Rule" id="MF_01345"/>
    </source>
</evidence>
<evidence type="ECO:0000256" key="2">
    <source>
        <dbReference type="SAM" id="MobiDB-lite"/>
    </source>
</evidence>
<evidence type="ECO:0000305" key="3"/>
<accession>Q1D766</accession>
<proteinExistence type="inferred from homology"/>
<protein>
    <recommendedName>
        <fullName evidence="1">Small ribosomal subunit protein uS17</fullName>
    </recommendedName>
    <alternativeName>
        <fullName evidence="3">30S ribosomal protein S17</fullName>
    </alternativeName>
</protein>